<sequence>MALPQGQLTFKDVAIEFSQEEWTCLDPAQKTLYRDVMLENYRNLVSLDISCKCVNTDLPPKGKNNMGEAFYTVKLERLESCDTVGLSFQEVQKNTYDFECQWKDDEGNYKTVLMLQKENLPGRRAQRDRRAAGNRHIENQLGVSFQSHLPELQQFQHEGKIYEYNQVEKSPNNRGKHYKCDECGKVFSQNSRLTSHKRIHTGEKPYQCNKCGKAFTVRSNLTIHQVIHTGEKPYKCNECGKVFSQPSNLAGHQRIHTGEKPYKCNECGKAFRAHSKLTTHQVIHTGEKPYKCKECGKCFTQNSHLASHRRIHTGEKPYKCNECGKAFSVRSSLTTHQTIHTGEKPYKCNECGKVFRHNSYLAKHRRIHTGEKPYKCNECGKAFSMHSNLTKHQIIHTGEKPFKCNECVKVFTQYSHLANHRRIHTGEKPYRCDECGKAFSVRSSLTTHQAIHTGEKPYKCNDCGKVFTQNSHLASHRGIHSGEKPYKCDECGKAFSQTSQLARHWRVHTGEKPYKCNECGKAFSVHSSLTIHQTIHTGQKPYKCNDCGKVFRHNSYLAIHQRIHTGEKPYKCNECGKAFSVHSNLATHQVIHTGEKPYKCNECGKVFTQNSHLANHRRIHTGEKPYRCNECGKAFSVRSTLTTHMAVHTGDKPYKCNQCGKVFTQNSNLAKHRRIHSG</sequence>
<protein>
    <recommendedName>
        <fullName>Zinc finger protein 665</fullName>
    </recommendedName>
    <alternativeName>
        <fullName>Zinc finger protein 160-like</fullName>
    </alternativeName>
</protein>
<keyword id="KW-0238">DNA-binding</keyword>
<keyword id="KW-0479">Metal-binding</keyword>
<keyword id="KW-0539">Nucleus</keyword>
<keyword id="KW-1267">Proteomics identification</keyword>
<keyword id="KW-1185">Reference proteome</keyword>
<keyword id="KW-0677">Repeat</keyword>
<keyword id="KW-0804">Transcription</keyword>
<keyword id="KW-0805">Transcription regulation</keyword>
<keyword id="KW-0862">Zinc</keyword>
<keyword id="KW-0863">Zinc-finger</keyword>
<comment type="function">
    <text>May be involved in transcriptional regulation.</text>
</comment>
<comment type="subcellular location">
    <subcellularLocation>
        <location evidence="4">Nucleus</location>
    </subcellularLocation>
</comment>
<comment type="similarity">
    <text evidence="4">Belongs to the krueppel C2H2-type zinc-finger protein family.</text>
</comment>
<comment type="sequence caution" evidence="4">
    <conflict type="miscellaneous discrepancy">
        <sequence resource="EMBL-CDS" id="BAB14911"/>
    </conflict>
    <text>Chimeric sequence.</text>
</comment>
<organism>
    <name type="scientific">Homo sapiens</name>
    <name type="common">Human</name>
    <dbReference type="NCBI Taxonomy" id="9606"/>
    <lineage>
        <taxon>Eukaryota</taxon>
        <taxon>Metazoa</taxon>
        <taxon>Chordata</taxon>
        <taxon>Craniata</taxon>
        <taxon>Vertebrata</taxon>
        <taxon>Euteleostomi</taxon>
        <taxon>Mammalia</taxon>
        <taxon>Eutheria</taxon>
        <taxon>Euarchontoglires</taxon>
        <taxon>Primates</taxon>
        <taxon>Haplorrhini</taxon>
        <taxon>Catarrhini</taxon>
        <taxon>Hominidae</taxon>
        <taxon>Homo</taxon>
    </lineage>
</organism>
<reference key="1">
    <citation type="journal article" date="2004" name="Nat. Genet.">
        <title>Complete sequencing and characterization of 21,243 full-length human cDNAs.</title>
        <authorList>
            <person name="Ota T."/>
            <person name="Suzuki Y."/>
            <person name="Nishikawa T."/>
            <person name="Otsuki T."/>
            <person name="Sugiyama T."/>
            <person name="Irie R."/>
            <person name="Wakamatsu A."/>
            <person name="Hayashi K."/>
            <person name="Sato H."/>
            <person name="Nagai K."/>
            <person name="Kimura K."/>
            <person name="Makita H."/>
            <person name="Sekine M."/>
            <person name="Obayashi M."/>
            <person name="Nishi T."/>
            <person name="Shibahara T."/>
            <person name="Tanaka T."/>
            <person name="Ishii S."/>
            <person name="Yamamoto J."/>
            <person name="Saito K."/>
            <person name="Kawai Y."/>
            <person name="Isono Y."/>
            <person name="Nakamura Y."/>
            <person name="Nagahari K."/>
            <person name="Murakami K."/>
            <person name="Yasuda T."/>
            <person name="Iwayanagi T."/>
            <person name="Wagatsuma M."/>
            <person name="Shiratori A."/>
            <person name="Sudo H."/>
            <person name="Hosoiri T."/>
            <person name="Kaku Y."/>
            <person name="Kodaira H."/>
            <person name="Kondo H."/>
            <person name="Sugawara M."/>
            <person name="Takahashi M."/>
            <person name="Kanda K."/>
            <person name="Yokoi T."/>
            <person name="Furuya T."/>
            <person name="Kikkawa E."/>
            <person name="Omura Y."/>
            <person name="Abe K."/>
            <person name="Kamihara K."/>
            <person name="Katsuta N."/>
            <person name="Sato K."/>
            <person name="Tanikawa M."/>
            <person name="Yamazaki M."/>
            <person name="Ninomiya K."/>
            <person name="Ishibashi T."/>
            <person name="Yamashita H."/>
            <person name="Murakawa K."/>
            <person name="Fujimori K."/>
            <person name="Tanai H."/>
            <person name="Kimata M."/>
            <person name="Watanabe M."/>
            <person name="Hiraoka S."/>
            <person name="Chiba Y."/>
            <person name="Ishida S."/>
            <person name="Ono Y."/>
            <person name="Takiguchi S."/>
            <person name="Watanabe S."/>
            <person name="Yosida M."/>
            <person name="Hotuta T."/>
            <person name="Kusano J."/>
            <person name="Kanehori K."/>
            <person name="Takahashi-Fujii A."/>
            <person name="Hara H."/>
            <person name="Tanase T.-O."/>
            <person name="Nomura Y."/>
            <person name="Togiya S."/>
            <person name="Komai F."/>
            <person name="Hara R."/>
            <person name="Takeuchi K."/>
            <person name="Arita M."/>
            <person name="Imose N."/>
            <person name="Musashino K."/>
            <person name="Yuuki H."/>
            <person name="Oshima A."/>
            <person name="Sasaki N."/>
            <person name="Aotsuka S."/>
            <person name="Yoshikawa Y."/>
            <person name="Matsunawa H."/>
            <person name="Ichihara T."/>
            <person name="Shiohata N."/>
            <person name="Sano S."/>
            <person name="Moriya S."/>
            <person name="Momiyama H."/>
            <person name="Satoh N."/>
            <person name="Takami S."/>
            <person name="Terashima Y."/>
            <person name="Suzuki O."/>
            <person name="Nakagawa S."/>
            <person name="Senoh A."/>
            <person name="Mizoguchi H."/>
            <person name="Goto Y."/>
            <person name="Shimizu F."/>
            <person name="Wakebe H."/>
            <person name="Hishigaki H."/>
            <person name="Watanabe T."/>
            <person name="Sugiyama A."/>
            <person name="Takemoto M."/>
            <person name="Kawakami B."/>
            <person name="Yamazaki M."/>
            <person name="Watanabe K."/>
            <person name="Kumagai A."/>
            <person name="Itakura S."/>
            <person name="Fukuzumi Y."/>
            <person name="Fujimori Y."/>
            <person name="Komiyama M."/>
            <person name="Tashiro H."/>
            <person name="Tanigami A."/>
            <person name="Fujiwara T."/>
            <person name="Ono T."/>
            <person name="Yamada K."/>
            <person name="Fujii Y."/>
            <person name="Ozaki K."/>
            <person name="Hirao M."/>
            <person name="Ohmori Y."/>
            <person name="Kawabata A."/>
            <person name="Hikiji T."/>
            <person name="Kobatake N."/>
            <person name="Inagaki H."/>
            <person name="Ikema Y."/>
            <person name="Okamoto S."/>
            <person name="Okitani R."/>
            <person name="Kawakami T."/>
            <person name="Noguchi S."/>
            <person name="Itoh T."/>
            <person name="Shigeta K."/>
            <person name="Senba T."/>
            <person name="Matsumura K."/>
            <person name="Nakajima Y."/>
            <person name="Mizuno T."/>
            <person name="Morinaga M."/>
            <person name="Sasaki M."/>
            <person name="Togashi T."/>
            <person name="Oyama M."/>
            <person name="Hata H."/>
            <person name="Watanabe M."/>
            <person name="Komatsu T."/>
            <person name="Mizushima-Sugano J."/>
            <person name="Satoh T."/>
            <person name="Shirai Y."/>
            <person name="Takahashi Y."/>
            <person name="Nakagawa K."/>
            <person name="Okumura K."/>
            <person name="Nagase T."/>
            <person name="Nomura N."/>
            <person name="Kikuchi H."/>
            <person name="Masuho Y."/>
            <person name="Yamashita R."/>
            <person name="Nakai K."/>
            <person name="Yada T."/>
            <person name="Nakamura Y."/>
            <person name="Ohara O."/>
            <person name="Isogai T."/>
            <person name="Sugano S."/>
        </authorList>
    </citation>
    <scope>NUCLEOTIDE SEQUENCE [LARGE SCALE MRNA]</scope>
    <scope>VARIANTS ALA-84; ARG-157 AND ILE-647</scope>
    <source>
        <tissue>Brain</tissue>
        <tissue>Thyroid</tissue>
    </source>
</reference>
<reference key="2">
    <citation type="journal article" date="2004" name="Nature">
        <title>The DNA sequence and biology of human chromosome 19.</title>
        <authorList>
            <person name="Grimwood J."/>
            <person name="Gordon L.A."/>
            <person name="Olsen A.S."/>
            <person name="Terry A."/>
            <person name="Schmutz J."/>
            <person name="Lamerdin J.E."/>
            <person name="Hellsten U."/>
            <person name="Goodstein D."/>
            <person name="Couronne O."/>
            <person name="Tran-Gyamfi M."/>
            <person name="Aerts A."/>
            <person name="Altherr M."/>
            <person name="Ashworth L."/>
            <person name="Bajorek E."/>
            <person name="Black S."/>
            <person name="Branscomb E."/>
            <person name="Caenepeel S."/>
            <person name="Carrano A.V."/>
            <person name="Caoile C."/>
            <person name="Chan Y.M."/>
            <person name="Christensen M."/>
            <person name="Cleland C.A."/>
            <person name="Copeland A."/>
            <person name="Dalin E."/>
            <person name="Dehal P."/>
            <person name="Denys M."/>
            <person name="Detter J.C."/>
            <person name="Escobar J."/>
            <person name="Flowers D."/>
            <person name="Fotopulos D."/>
            <person name="Garcia C."/>
            <person name="Georgescu A.M."/>
            <person name="Glavina T."/>
            <person name="Gomez M."/>
            <person name="Gonzales E."/>
            <person name="Groza M."/>
            <person name="Hammon N."/>
            <person name="Hawkins T."/>
            <person name="Haydu L."/>
            <person name="Ho I."/>
            <person name="Huang W."/>
            <person name="Israni S."/>
            <person name="Jett J."/>
            <person name="Kadner K."/>
            <person name="Kimball H."/>
            <person name="Kobayashi A."/>
            <person name="Larionov V."/>
            <person name="Leem S.-H."/>
            <person name="Lopez F."/>
            <person name="Lou Y."/>
            <person name="Lowry S."/>
            <person name="Malfatti S."/>
            <person name="Martinez D."/>
            <person name="McCready P.M."/>
            <person name="Medina C."/>
            <person name="Morgan J."/>
            <person name="Nelson K."/>
            <person name="Nolan M."/>
            <person name="Ovcharenko I."/>
            <person name="Pitluck S."/>
            <person name="Pollard M."/>
            <person name="Popkie A.P."/>
            <person name="Predki P."/>
            <person name="Quan G."/>
            <person name="Ramirez L."/>
            <person name="Rash S."/>
            <person name="Retterer J."/>
            <person name="Rodriguez A."/>
            <person name="Rogers S."/>
            <person name="Salamov A."/>
            <person name="Salazar A."/>
            <person name="She X."/>
            <person name="Smith D."/>
            <person name="Slezak T."/>
            <person name="Solovyev V."/>
            <person name="Thayer N."/>
            <person name="Tice H."/>
            <person name="Tsai M."/>
            <person name="Ustaszewska A."/>
            <person name="Vo N."/>
            <person name="Wagner M."/>
            <person name="Wheeler J."/>
            <person name="Wu K."/>
            <person name="Xie G."/>
            <person name="Yang J."/>
            <person name="Dubchak I."/>
            <person name="Furey T.S."/>
            <person name="DeJong P."/>
            <person name="Dickson M."/>
            <person name="Gordon D."/>
            <person name="Eichler E.E."/>
            <person name="Pennacchio L.A."/>
            <person name="Richardson P."/>
            <person name="Stubbs L."/>
            <person name="Rokhsar D.S."/>
            <person name="Myers R.M."/>
            <person name="Rubin E.M."/>
            <person name="Lucas S.M."/>
        </authorList>
    </citation>
    <scope>NUCLEOTIDE SEQUENCE [LARGE SCALE GENOMIC DNA]</scope>
</reference>
<accession>Q9H7R5</accession>
<accession>A8K5T8</accession>
<name>ZN665_HUMAN</name>
<feature type="chain" id="PRO_0000325613" description="Zinc finger protein 665">
    <location>
        <begin position="1"/>
        <end position="678"/>
    </location>
</feature>
<feature type="domain" description="KRAB" evidence="2">
    <location>
        <begin position="8"/>
        <end position="83"/>
    </location>
</feature>
<feature type="zinc finger region" description="C2H2-type 1" evidence="1">
    <location>
        <begin position="178"/>
        <end position="200"/>
    </location>
</feature>
<feature type="zinc finger region" description="C2H2-type 2" evidence="1">
    <location>
        <begin position="206"/>
        <end position="228"/>
    </location>
</feature>
<feature type="zinc finger region" description="C2H2-type 3" evidence="1">
    <location>
        <begin position="234"/>
        <end position="256"/>
    </location>
</feature>
<feature type="zinc finger region" description="C2H2-type 4" evidence="1">
    <location>
        <begin position="262"/>
        <end position="284"/>
    </location>
</feature>
<feature type="zinc finger region" description="C2H2-type 5" evidence="1">
    <location>
        <begin position="290"/>
        <end position="312"/>
    </location>
</feature>
<feature type="zinc finger region" description="C2H2-type 6" evidence="1">
    <location>
        <begin position="318"/>
        <end position="340"/>
    </location>
</feature>
<feature type="zinc finger region" description="C2H2-type 7" evidence="1">
    <location>
        <begin position="346"/>
        <end position="368"/>
    </location>
</feature>
<feature type="zinc finger region" description="C2H2-type 8" evidence="1">
    <location>
        <begin position="374"/>
        <end position="396"/>
    </location>
</feature>
<feature type="zinc finger region" description="C2H2-type 9" evidence="1">
    <location>
        <begin position="402"/>
        <end position="424"/>
    </location>
</feature>
<feature type="zinc finger region" description="C2H2-type 10" evidence="1">
    <location>
        <begin position="430"/>
        <end position="452"/>
    </location>
</feature>
<feature type="zinc finger region" description="C2H2-type 11" evidence="1">
    <location>
        <begin position="458"/>
        <end position="480"/>
    </location>
</feature>
<feature type="zinc finger region" description="C2H2-type 12" evidence="1">
    <location>
        <begin position="486"/>
        <end position="508"/>
    </location>
</feature>
<feature type="zinc finger region" description="C2H2-type 13" evidence="1">
    <location>
        <begin position="514"/>
        <end position="536"/>
    </location>
</feature>
<feature type="zinc finger region" description="C2H2-type 14" evidence="1">
    <location>
        <begin position="542"/>
        <end position="564"/>
    </location>
</feature>
<feature type="zinc finger region" description="C2H2-type 15" evidence="1">
    <location>
        <begin position="570"/>
        <end position="592"/>
    </location>
</feature>
<feature type="zinc finger region" description="C2H2-type 16" evidence="1">
    <location>
        <begin position="598"/>
        <end position="620"/>
    </location>
</feature>
<feature type="zinc finger region" description="C2H2-type 17" evidence="1">
    <location>
        <begin position="626"/>
        <end position="648"/>
    </location>
</feature>
<feature type="zinc finger region" description="C2H2-type 18" evidence="1">
    <location>
        <begin position="654"/>
        <end position="676"/>
    </location>
</feature>
<feature type="sequence variant" id="VAR_039895" description="In dbSNP:rs12460170." evidence="3">
    <original>V</original>
    <variation>A</variation>
    <location>
        <position position="84"/>
    </location>
</feature>
<feature type="sequence variant" id="VAR_039896" description="In dbSNP:rs4801959." evidence="3">
    <original>H</original>
    <variation>R</variation>
    <location>
        <position position="157"/>
    </location>
</feature>
<feature type="sequence variant" id="VAR_039897" description="In dbSNP:rs4801958." evidence="3">
    <original>V</original>
    <variation>I</variation>
    <location>
        <position position="647"/>
    </location>
</feature>
<feature type="sequence conflict" description="In Ref. 1; BAF84092." evidence="4" ref="1">
    <original>N</original>
    <variation>S</variation>
    <location>
        <position position="419"/>
    </location>
</feature>
<evidence type="ECO:0000255" key="1">
    <source>
        <dbReference type="PROSITE-ProRule" id="PRU00042"/>
    </source>
</evidence>
<evidence type="ECO:0000255" key="2">
    <source>
        <dbReference type="PROSITE-ProRule" id="PRU00119"/>
    </source>
</evidence>
<evidence type="ECO:0000269" key="3">
    <source>
    </source>
</evidence>
<evidence type="ECO:0000305" key="4"/>
<dbReference type="EMBL" id="AK024407">
    <property type="protein sequence ID" value="BAB14911.1"/>
    <property type="status" value="ALT_SEQ"/>
    <property type="molecule type" value="mRNA"/>
</dbReference>
<dbReference type="EMBL" id="AK291403">
    <property type="protein sequence ID" value="BAF84092.1"/>
    <property type="molecule type" value="mRNA"/>
</dbReference>
<dbReference type="EMBL" id="AC010328">
    <property type="status" value="NOT_ANNOTATED_CDS"/>
    <property type="molecule type" value="Genomic_DNA"/>
</dbReference>
<dbReference type="CCDS" id="CCDS46169.1"/>
<dbReference type="RefSeq" id="NP_001340388.1">
    <property type="nucleotide sequence ID" value="NM_001353459.2"/>
</dbReference>
<dbReference type="RefSeq" id="NP_079009.3">
    <property type="nucleotide sequence ID" value="NM_024733.3"/>
</dbReference>
<dbReference type="RefSeq" id="XP_005259323.1">
    <property type="nucleotide sequence ID" value="XM_005259266.4"/>
</dbReference>
<dbReference type="RefSeq" id="XP_047295402.1">
    <property type="nucleotide sequence ID" value="XM_047439446.1"/>
</dbReference>
<dbReference type="SMR" id="Q9H7R5"/>
<dbReference type="BioGRID" id="122888">
    <property type="interactions" value="2"/>
</dbReference>
<dbReference type="FunCoup" id="Q9H7R5">
    <property type="interactions" value="10"/>
</dbReference>
<dbReference type="IntAct" id="Q9H7R5">
    <property type="interactions" value="3"/>
</dbReference>
<dbReference type="MINT" id="Q9H7R5"/>
<dbReference type="STRING" id="9606.ENSP00000379702"/>
<dbReference type="GlyGen" id="Q9H7R5">
    <property type="glycosylation" value="1 site, 1 O-linked glycan (1 site)"/>
</dbReference>
<dbReference type="iPTMnet" id="Q9H7R5"/>
<dbReference type="PhosphoSitePlus" id="Q9H7R5"/>
<dbReference type="BioMuta" id="ZNF665"/>
<dbReference type="DMDM" id="325511370"/>
<dbReference type="jPOST" id="Q9H7R5"/>
<dbReference type="MassIVE" id="Q9H7R5"/>
<dbReference type="PaxDb" id="9606-ENSP00000379702"/>
<dbReference type="PeptideAtlas" id="Q9H7R5"/>
<dbReference type="Antibodypedia" id="9473">
    <property type="antibodies" value="87 antibodies from 14 providers"/>
</dbReference>
<dbReference type="DNASU" id="79788"/>
<dbReference type="Ensembl" id="ENST00000396424.5">
    <property type="protein sequence ID" value="ENSP00000379702.2"/>
    <property type="gene ID" value="ENSG00000197497.11"/>
</dbReference>
<dbReference type="Ensembl" id="ENST00000650736.1">
    <property type="protein sequence ID" value="ENSP00000498600.1"/>
    <property type="gene ID" value="ENSG00000197497.11"/>
</dbReference>
<dbReference type="GeneID" id="79788"/>
<dbReference type="KEGG" id="hsa:79788"/>
<dbReference type="MANE-Select" id="ENST00000396424.5">
    <property type="protein sequence ID" value="ENSP00000379702.2"/>
    <property type="RefSeq nucleotide sequence ID" value="NM_024733.5"/>
    <property type="RefSeq protein sequence ID" value="NP_079009.3"/>
</dbReference>
<dbReference type="UCSC" id="uc010eqm.2">
    <property type="organism name" value="human"/>
</dbReference>
<dbReference type="AGR" id="HGNC:25885"/>
<dbReference type="CTD" id="79788"/>
<dbReference type="GeneCards" id="ZNF665"/>
<dbReference type="HGNC" id="HGNC:25885">
    <property type="gene designation" value="ZNF665"/>
</dbReference>
<dbReference type="HPA" id="ENSG00000197497">
    <property type="expression patterns" value="Low tissue specificity"/>
</dbReference>
<dbReference type="neXtProt" id="NX_Q9H7R5"/>
<dbReference type="OpenTargets" id="ENSG00000197497"/>
<dbReference type="VEuPathDB" id="HostDB:ENSG00000197497"/>
<dbReference type="eggNOG" id="KOG1721">
    <property type="taxonomic scope" value="Eukaryota"/>
</dbReference>
<dbReference type="GeneTree" id="ENSGT00940000162609"/>
<dbReference type="HOGENOM" id="CLU_002678_0_12_1"/>
<dbReference type="InParanoid" id="Q9H7R5"/>
<dbReference type="OMA" id="SCKCVNK"/>
<dbReference type="OrthoDB" id="9411774at2759"/>
<dbReference type="PAN-GO" id="Q9H7R5">
    <property type="GO annotations" value="4 GO annotations based on evolutionary models"/>
</dbReference>
<dbReference type="PhylomeDB" id="Q9H7R5"/>
<dbReference type="TreeFam" id="TF341892"/>
<dbReference type="PathwayCommons" id="Q9H7R5"/>
<dbReference type="Reactome" id="R-HSA-212436">
    <property type="pathway name" value="Generic Transcription Pathway"/>
</dbReference>
<dbReference type="SignaLink" id="Q9H7R5"/>
<dbReference type="BioGRID-ORCS" id="79788">
    <property type="hits" value="43 hits in 1156 CRISPR screens"/>
</dbReference>
<dbReference type="ChiTaRS" id="ZNF665">
    <property type="organism name" value="human"/>
</dbReference>
<dbReference type="GenomeRNAi" id="79788"/>
<dbReference type="Pharos" id="Q9H7R5">
    <property type="development level" value="Tdark"/>
</dbReference>
<dbReference type="PRO" id="PR:Q9H7R5"/>
<dbReference type="Proteomes" id="UP000005640">
    <property type="component" value="Chromosome 19"/>
</dbReference>
<dbReference type="RNAct" id="Q9H7R5">
    <property type="molecule type" value="protein"/>
</dbReference>
<dbReference type="Bgee" id="ENSG00000197497">
    <property type="expression patterns" value="Expressed in corpus epididymis and 188 other cell types or tissues"/>
</dbReference>
<dbReference type="ExpressionAtlas" id="Q9H7R5">
    <property type="expression patterns" value="baseline and differential"/>
</dbReference>
<dbReference type="GO" id="GO:0005634">
    <property type="term" value="C:nucleus"/>
    <property type="evidence" value="ECO:0000318"/>
    <property type="project" value="GO_Central"/>
</dbReference>
<dbReference type="GO" id="GO:0000981">
    <property type="term" value="F:DNA-binding transcription factor activity, RNA polymerase II-specific"/>
    <property type="evidence" value="ECO:0000318"/>
    <property type="project" value="GO_Central"/>
</dbReference>
<dbReference type="GO" id="GO:0000978">
    <property type="term" value="F:RNA polymerase II cis-regulatory region sequence-specific DNA binding"/>
    <property type="evidence" value="ECO:0000318"/>
    <property type="project" value="GO_Central"/>
</dbReference>
<dbReference type="GO" id="GO:0008270">
    <property type="term" value="F:zinc ion binding"/>
    <property type="evidence" value="ECO:0007669"/>
    <property type="project" value="UniProtKB-KW"/>
</dbReference>
<dbReference type="GO" id="GO:0006357">
    <property type="term" value="P:regulation of transcription by RNA polymerase II"/>
    <property type="evidence" value="ECO:0000318"/>
    <property type="project" value="GO_Central"/>
</dbReference>
<dbReference type="CDD" id="cd07765">
    <property type="entry name" value="KRAB_A-box"/>
    <property type="match status" value="1"/>
</dbReference>
<dbReference type="FunFam" id="3.30.160.60:FF:004137">
    <property type="match status" value="5"/>
</dbReference>
<dbReference type="FunFam" id="3.30.160.60:FF:002239">
    <property type="entry name" value="Zinc finger protein 226"/>
    <property type="match status" value="1"/>
</dbReference>
<dbReference type="FunFam" id="3.30.160.60:FF:002278">
    <property type="entry name" value="Zinc finger protein 320"/>
    <property type="match status" value="3"/>
</dbReference>
<dbReference type="FunFam" id="3.30.160.60:FF:002343">
    <property type="entry name" value="Zinc finger protein 33A"/>
    <property type="match status" value="1"/>
</dbReference>
<dbReference type="FunFam" id="3.30.160.60:FF:000133">
    <property type="entry name" value="Zinc finger protein 347"/>
    <property type="match status" value="4"/>
</dbReference>
<dbReference type="FunFam" id="3.30.160.60:FF:002402">
    <property type="entry name" value="Zinc finger protein 347"/>
    <property type="match status" value="2"/>
</dbReference>
<dbReference type="FunFam" id="3.30.160.60:FF:000016">
    <property type="entry name" value="zinc finger protein 37 homolog"/>
    <property type="match status" value="1"/>
</dbReference>
<dbReference type="FunFam" id="3.30.160.60:FF:002090">
    <property type="entry name" value="Zinc finger protein 473"/>
    <property type="match status" value="1"/>
</dbReference>
<dbReference type="FunFam" id="3.30.160.60:FF:002254">
    <property type="entry name" value="Zinc finger protein 540"/>
    <property type="match status" value="1"/>
</dbReference>
<dbReference type="FunFam" id="3.30.160.60:FF:001270">
    <property type="entry name" value="zinc finger protein 583 isoform X1"/>
    <property type="match status" value="1"/>
</dbReference>
<dbReference type="FunFam" id="3.30.160.60:FF:000197">
    <property type="entry name" value="Zinc finger protein 606"/>
    <property type="match status" value="2"/>
</dbReference>
<dbReference type="FunFam" id="3.30.160.60:FF:002134">
    <property type="entry name" value="Zinc finger protein 616"/>
    <property type="match status" value="1"/>
</dbReference>
<dbReference type="Gene3D" id="6.10.140.140">
    <property type="match status" value="1"/>
</dbReference>
<dbReference type="Gene3D" id="3.30.160.60">
    <property type="entry name" value="Classic Zinc Finger"/>
    <property type="match status" value="18"/>
</dbReference>
<dbReference type="InterPro" id="IPR001909">
    <property type="entry name" value="KRAB"/>
</dbReference>
<dbReference type="InterPro" id="IPR036051">
    <property type="entry name" value="KRAB_dom_sf"/>
</dbReference>
<dbReference type="InterPro" id="IPR050331">
    <property type="entry name" value="Zinc_finger"/>
</dbReference>
<dbReference type="InterPro" id="IPR036236">
    <property type="entry name" value="Znf_C2H2_sf"/>
</dbReference>
<dbReference type="InterPro" id="IPR013087">
    <property type="entry name" value="Znf_C2H2_type"/>
</dbReference>
<dbReference type="PANTHER" id="PTHR16515">
    <property type="entry name" value="PR DOMAIN ZINC FINGER PROTEIN"/>
    <property type="match status" value="1"/>
</dbReference>
<dbReference type="PANTHER" id="PTHR16515:SF51">
    <property type="entry name" value="ZINC FINGER PROTEIN 833-RELATED"/>
    <property type="match status" value="1"/>
</dbReference>
<dbReference type="Pfam" id="PF01352">
    <property type="entry name" value="KRAB"/>
    <property type="match status" value="1"/>
</dbReference>
<dbReference type="Pfam" id="PF00096">
    <property type="entry name" value="zf-C2H2"/>
    <property type="match status" value="18"/>
</dbReference>
<dbReference type="SMART" id="SM00349">
    <property type="entry name" value="KRAB"/>
    <property type="match status" value="1"/>
</dbReference>
<dbReference type="SMART" id="SM00355">
    <property type="entry name" value="ZnF_C2H2"/>
    <property type="match status" value="18"/>
</dbReference>
<dbReference type="SUPFAM" id="SSF57667">
    <property type="entry name" value="beta-beta-alpha zinc fingers"/>
    <property type="match status" value="10"/>
</dbReference>
<dbReference type="SUPFAM" id="SSF109640">
    <property type="entry name" value="KRAB domain (Kruppel-associated box)"/>
    <property type="match status" value="1"/>
</dbReference>
<dbReference type="PROSITE" id="PS50805">
    <property type="entry name" value="KRAB"/>
    <property type="match status" value="1"/>
</dbReference>
<dbReference type="PROSITE" id="PS00028">
    <property type="entry name" value="ZINC_FINGER_C2H2_1"/>
    <property type="match status" value="18"/>
</dbReference>
<dbReference type="PROSITE" id="PS50157">
    <property type="entry name" value="ZINC_FINGER_C2H2_2"/>
    <property type="match status" value="18"/>
</dbReference>
<gene>
    <name type="primary">ZNF665</name>
    <name type="synonym">ZFP160L</name>
</gene>
<proteinExistence type="evidence at protein level"/>